<comment type="function">
    <text evidence="1">Catalyzes the first step in hexosamine metabolism, converting fructose-6P into glucosamine-6P using glutamine as a nitrogen source.</text>
</comment>
<comment type="catalytic activity">
    <reaction evidence="1">
        <text>D-fructose 6-phosphate + L-glutamine = D-glucosamine 6-phosphate + L-glutamate</text>
        <dbReference type="Rhea" id="RHEA:13237"/>
        <dbReference type="ChEBI" id="CHEBI:29985"/>
        <dbReference type="ChEBI" id="CHEBI:58359"/>
        <dbReference type="ChEBI" id="CHEBI:58725"/>
        <dbReference type="ChEBI" id="CHEBI:61527"/>
        <dbReference type="EC" id="2.6.1.16"/>
    </reaction>
</comment>
<comment type="subunit">
    <text evidence="1">Homodimer.</text>
</comment>
<comment type="subcellular location">
    <subcellularLocation>
        <location evidence="1">Cytoplasm</location>
    </subcellularLocation>
</comment>
<protein>
    <recommendedName>
        <fullName evidence="1">Glutamine--fructose-6-phosphate aminotransferase [isomerizing]</fullName>
        <ecNumber evidence="1">2.6.1.16</ecNumber>
    </recommendedName>
    <alternativeName>
        <fullName evidence="1">D-fructose-6-phosphate amidotransferase</fullName>
    </alternativeName>
    <alternativeName>
        <fullName evidence="1">GFAT</fullName>
    </alternativeName>
    <alternativeName>
        <fullName evidence="1">Glucosamine-6-phosphate synthase</fullName>
    </alternativeName>
    <alternativeName>
        <fullName evidence="1">Hexosephosphate aminotransferase</fullName>
    </alternativeName>
    <alternativeName>
        <fullName evidence="1">L-glutamine--D-fructose-6-phosphate amidotransferase</fullName>
    </alternativeName>
</protein>
<organism>
    <name type="scientific">Streptococcus pneumoniae serotype 4 (strain ATCC BAA-334 / TIGR4)</name>
    <dbReference type="NCBI Taxonomy" id="170187"/>
    <lineage>
        <taxon>Bacteria</taxon>
        <taxon>Bacillati</taxon>
        <taxon>Bacillota</taxon>
        <taxon>Bacilli</taxon>
        <taxon>Lactobacillales</taxon>
        <taxon>Streptococcaceae</taxon>
        <taxon>Streptococcus</taxon>
    </lineage>
</organism>
<name>GLMS_STRPN</name>
<feature type="initiator methionine" description="Removed" evidence="1">
    <location>
        <position position="1"/>
    </location>
</feature>
<feature type="chain" id="PRO_0000135391" description="Glutamine--fructose-6-phosphate aminotransferase [isomerizing]">
    <location>
        <begin position="2"/>
        <end position="602"/>
    </location>
</feature>
<feature type="domain" description="Glutamine amidotransferase type-2" evidence="1">
    <location>
        <begin position="2"/>
        <end position="217"/>
    </location>
</feature>
<feature type="domain" description="SIS 1" evidence="1">
    <location>
        <begin position="283"/>
        <end position="422"/>
    </location>
</feature>
<feature type="domain" description="SIS 2" evidence="1">
    <location>
        <begin position="455"/>
        <end position="592"/>
    </location>
</feature>
<feature type="region of interest" description="Disordered" evidence="2">
    <location>
        <begin position="67"/>
        <end position="87"/>
    </location>
</feature>
<feature type="compositionally biased region" description="Basic and acidic residues" evidence="2">
    <location>
        <begin position="77"/>
        <end position="87"/>
    </location>
</feature>
<feature type="active site" description="Nucleophile; for GATase activity" evidence="1">
    <location>
        <position position="2"/>
    </location>
</feature>
<feature type="active site" description="For Fru-6P isomerization activity" evidence="1">
    <location>
        <position position="597"/>
    </location>
</feature>
<keyword id="KW-0032">Aminotransferase</keyword>
<keyword id="KW-0963">Cytoplasm</keyword>
<keyword id="KW-0315">Glutamine amidotransferase</keyword>
<keyword id="KW-1185">Reference proteome</keyword>
<keyword id="KW-0677">Repeat</keyword>
<keyword id="KW-0808">Transferase</keyword>
<reference key="1">
    <citation type="journal article" date="2001" name="Science">
        <title>Complete genome sequence of a virulent isolate of Streptococcus pneumoniae.</title>
        <authorList>
            <person name="Tettelin H."/>
            <person name="Nelson K.E."/>
            <person name="Paulsen I.T."/>
            <person name="Eisen J.A."/>
            <person name="Read T.D."/>
            <person name="Peterson S.N."/>
            <person name="Heidelberg J.F."/>
            <person name="DeBoy R.T."/>
            <person name="Haft D.H."/>
            <person name="Dodson R.J."/>
            <person name="Durkin A.S."/>
            <person name="Gwinn M.L."/>
            <person name="Kolonay J.F."/>
            <person name="Nelson W.C."/>
            <person name="Peterson J.D."/>
            <person name="Umayam L.A."/>
            <person name="White O."/>
            <person name="Salzberg S.L."/>
            <person name="Lewis M.R."/>
            <person name="Radune D."/>
            <person name="Holtzapple E.K."/>
            <person name="Khouri H.M."/>
            <person name="Wolf A.M."/>
            <person name="Utterback T.R."/>
            <person name="Hansen C.L."/>
            <person name="McDonald L.A."/>
            <person name="Feldblyum T.V."/>
            <person name="Angiuoli S.V."/>
            <person name="Dickinson T."/>
            <person name="Hickey E.K."/>
            <person name="Holt I.E."/>
            <person name="Loftus B.J."/>
            <person name="Yang F."/>
            <person name="Smith H.O."/>
            <person name="Venter J.C."/>
            <person name="Dougherty B.A."/>
            <person name="Morrison D.A."/>
            <person name="Hollingshead S.K."/>
            <person name="Fraser C.M."/>
        </authorList>
    </citation>
    <scope>NUCLEOTIDE SEQUENCE [LARGE SCALE GENOMIC DNA]</scope>
    <source>
        <strain>ATCC BAA-334 / TIGR4</strain>
    </source>
</reference>
<dbReference type="EC" id="2.6.1.16" evidence="1"/>
<dbReference type="EMBL" id="AE005672">
    <property type="protein sequence ID" value="AAK74444.1"/>
    <property type="molecule type" value="Genomic_DNA"/>
</dbReference>
<dbReference type="PIR" id="C95031">
    <property type="entry name" value="C95031"/>
</dbReference>
<dbReference type="RefSeq" id="WP_000334262.1">
    <property type="nucleotide sequence ID" value="NZ_CP155539.1"/>
</dbReference>
<dbReference type="SMR" id="Q97SQ9"/>
<dbReference type="PaxDb" id="170187-SP_0266"/>
<dbReference type="EnsemblBacteria" id="AAK74444">
    <property type="protein sequence ID" value="AAK74444"/>
    <property type="gene ID" value="SP_0266"/>
</dbReference>
<dbReference type="KEGG" id="spn:SP_0266"/>
<dbReference type="eggNOG" id="COG0449">
    <property type="taxonomic scope" value="Bacteria"/>
</dbReference>
<dbReference type="BioCyc" id="SPNE170187:G1FZB-273-MONOMER"/>
<dbReference type="Proteomes" id="UP000000585">
    <property type="component" value="Chromosome"/>
</dbReference>
<dbReference type="GO" id="GO:0005829">
    <property type="term" value="C:cytosol"/>
    <property type="evidence" value="ECO:0007669"/>
    <property type="project" value="TreeGrafter"/>
</dbReference>
<dbReference type="GO" id="GO:0097367">
    <property type="term" value="F:carbohydrate derivative binding"/>
    <property type="evidence" value="ECO:0007669"/>
    <property type="project" value="InterPro"/>
</dbReference>
<dbReference type="GO" id="GO:0004360">
    <property type="term" value="F:glutamine-fructose-6-phosphate transaminase (isomerizing) activity"/>
    <property type="evidence" value="ECO:0007669"/>
    <property type="project" value="UniProtKB-UniRule"/>
</dbReference>
<dbReference type="GO" id="GO:0005975">
    <property type="term" value="P:carbohydrate metabolic process"/>
    <property type="evidence" value="ECO:0007669"/>
    <property type="project" value="UniProtKB-UniRule"/>
</dbReference>
<dbReference type="GO" id="GO:0006002">
    <property type="term" value="P:fructose 6-phosphate metabolic process"/>
    <property type="evidence" value="ECO:0007669"/>
    <property type="project" value="TreeGrafter"/>
</dbReference>
<dbReference type="GO" id="GO:0006487">
    <property type="term" value="P:protein N-linked glycosylation"/>
    <property type="evidence" value="ECO:0007669"/>
    <property type="project" value="TreeGrafter"/>
</dbReference>
<dbReference type="GO" id="GO:0006047">
    <property type="term" value="P:UDP-N-acetylglucosamine metabolic process"/>
    <property type="evidence" value="ECO:0007669"/>
    <property type="project" value="TreeGrafter"/>
</dbReference>
<dbReference type="CDD" id="cd00714">
    <property type="entry name" value="GFAT"/>
    <property type="match status" value="1"/>
</dbReference>
<dbReference type="CDD" id="cd05008">
    <property type="entry name" value="SIS_GlmS_GlmD_1"/>
    <property type="match status" value="1"/>
</dbReference>
<dbReference type="CDD" id="cd05009">
    <property type="entry name" value="SIS_GlmS_GlmD_2"/>
    <property type="match status" value="1"/>
</dbReference>
<dbReference type="FunFam" id="3.40.50.10490:FF:000001">
    <property type="entry name" value="Glutamine--fructose-6-phosphate aminotransferase [isomerizing]"/>
    <property type="match status" value="1"/>
</dbReference>
<dbReference type="FunFam" id="3.40.50.10490:FF:000022">
    <property type="entry name" value="Glutamine--fructose-6-phosphate aminotransferase [isomerizing]"/>
    <property type="match status" value="1"/>
</dbReference>
<dbReference type="FunFam" id="3.60.20.10:FF:000006">
    <property type="entry name" value="Glutamine--fructose-6-phosphate aminotransferase [isomerizing]"/>
    <property type="match status" value="1"/>
</dbReference>
<dbReference type="Gene3D" id="3.40.50.10490">
    <property type="entry name" value="Glucose-6-phosphate isomerase like protein, domain 1"/>
    <property type="match status" value="2"/>
</dbReference>
<dbReference type="Gene3D" id="3.60.20.10">
    <property type="entry name" value="Glutamine Phosphoribosylpyrophosphate, subunit 1, domain 1"/>
    <property type="match status" value="1"/>
</dbReference>
<dbReference type="HAMAP" id="MF_00164">
    <property type="entry name" value="GlmS"/>
    <property type="match status" value="1"/>
</dbReference>
<dbReference type="InterPro" id="IPR017932">
    <property type="entry name" value="GATase_2_dom"/>
</dbReference>
<dbReference type="InterPro" id="IPR005855">
    <property type="entry name" value="GFAT"/>
</dbReference>
<dbReference type="InterPro" id="IPR047084">
    <property type="entry name" value="GFAT_N"/>
</dbReference>
<dbReference type="InterPro" id="IPR035466">
    <property type="entry name" value="GlmS/AgaS_SIS"/>
</dbReference>
<dbReference type="InterPro" id="IPR035490">
    <property type="entry name" value="GlmS/FrlB_SIS"/>
</dbReference>
<dbReference type="InterPro" id="IPR029055">
    <property type="entry name" value="Ntn_hydrolases_N"/>
</dbReference>
<dbReference type="InterPro" id="IPR001347">
    <property type="entry name" value="SIS_dom"/>
</dbReference>
<dbReference type="InterPro" id="IPR046348">
    <property type="entry name" value="SIS_dom_sf"/>
</dbReference>
<dbReference type="NCBIfam" id="TIGR01135">
    <property type="entry name" value="glmS"/>
    <property type="match status" value="1"/>
</dbReference>
<dbReference type="NCBIfam" id="NF001484">
    <property type="entry name" value="PRK00331.1"/>
    <property type="match status" value="1"/>
</dbReference>
<dbReference type="PANTHER" id="PTHR10937">
    <property type="entry name" value="GLUCOSAMINE--FRUCTOSE-6-PHOSPHATE AMINOTRANSFERASE, ISOMERIZING"/>
    <property type="match status" value="1"/>
</dbReference>
<dbReference type="PANTHER" id="PTHR10937:SF0">
    <property type="entry name" value="GLUTAMINE--FRUCTOSE-6-PHOSPHATE TRANSAMINASE (ISOMERIZING)"/>
    <property type="match status" value="1"/>
</dbReference>
<dbReference type="Pfam" id="PF13522">
    <property type="entry name" value="GATase_6"/>
    <property type="match status" value="1"/>
</dbReference>
<dbReference type="Pfam" id="PF01380">
    <property type="entry name" value="SIS"/>
    <property type="match status" value="2"/>
</dbReference>
<dbReference type="SUPFAM" id="SSF56235">
    <property type="entry name" value="N-terminal nucleophile aminohydrolases (Ntn hydrolases)"/>
    <property type="match status" value="1"/>
</dbReference>
<dbReference type="SUPFAM" id="SSF53697">
    <property type="entry name" value="SIS domain"/>
    <property type="match status" value="1"/>
</dbReference>
<dbReference type="PROSITE" id="PS51278">
    <property type="entry name" value="GATASE_TYPE_2"/>
    <property type="match status" value="1"/>
</dbReference>
<dbReference type="PROSITE" id="PS51464">
    <property type="entry name" value="SIS"/>
    <property type="match status" value="2"/>
</dbReference>
<gene>
    <name evidence="1" type="primary">glmS</name>
    <name type="ordered locus">SP_0266</name>
</gene>
<evidence type="ECO:0000255" key="1">
    <source>
        <dbReference type="HAMAP-Rule" id="MF_00164"/>
    </source>
</evidence>
<evidence type="ECO:0000256" key="2">
    <source>
        <dbReference type="SAM" id="MobiDB-lite"/>
    </source>
</evidence>
<accession>Q97SQ9</accession>
<sequence length="602" mass="65634">MCGIVGVVGNTNATDILIQGLEKLEYRGYDSAGIFVLDGADNHLVKAVGRIAELSAKTAGVEGTTGIGHTRWATHGKPTEDNAHPHRSETERFVLVHNGVIENYLEIKEEYLAGHHFKGQTDTEIAVHLIGKFAEEEGLSVLEAFKKALHIIRGSYAFALVDSQDPEVIYVAKNKSPLLIGLGEGYNMVCSDAMAMIRETNQYMEIHDQELVIVKADSVEVQDYDGNRRERASYTAELDLSDIGKGTYPYYMLKEIDEQPTVMRKLIQAYTDEAGQVVVDPDIIKAVQDADRIYILAAGTSYHAGFASKKMLEELTDTPVELGISSEWGYGMPLLSKKPLFIFISQSGETADSRQVLVKANEMGIPSLTVTNVPGSTLSREANYTMLLHAGPEIAVASTKAYTAQIAALAFLAKAVGEANGNAKAQAFDLVHELSIVAQSIESTLSEKETIEVKVRELLETTRNAFYIGRGQDYYVAMEASLKLKEISYIQCEGFAAGELKHGTIALIEEGTPVLALLSDPVLANHTRGNIQEVAARGAKVLTIAEENVAKDTDDIVLTTVHPYLSPISMVVPTQLVAYFATLHRGLDVDKPRNLAKSVTVE</sequence>
<proteinExistence type="inferred from homology"/>